<gene>
    <name evidence="1" type="primary">zupT</name>
    <name type="ordered locus">E2348C_3338</name>
</gene>
<comment type="function">
    <text evidence="1">Mediates zinc uptake. May also transport other divalent cations.</text>
</comment>
<comment type="catalytic activity">
    <reaction evidence="1">
        <text>Zn(2+)(in) = Zn(2+)(out)</text>
        <dbReference type="Rhea" id="RHEA:29351"/>
        <dbReference type="ChEBI" id="CHEBI:29105"/>
    </reaction>
</comment>
<comment type="subcellular location">
    <subcellularLocation>
        <location evidence="1">Cell inner membrane</location>
        <topology evidence="1">Multi-pass membrane protein</topology>
    </subcellularLocation>
</comment>
<comment type="similarity">
    <text evidence="1">Belongs to the ZIP transporter (TC 2.A.5) family. ZupT subfamily.</text>
</comment>
<feature type="chain" id="PRO_1000200394" description="Zinc transporter ZupT">
    <location>
        <begin position="1"/>
        <end position="257"/>
    </location>
</feature>
<feature type="transmembrane region" description="Helical" evidence="1">
    <location>
        <begin position="5"/>
        <end position="25"/>
    </location>
</feature>
<feature type="transmembrane region" description="Helical" evidence="1">
    <location>
        <begin position="32"/>
        <end position="52"/>
    </location>
</feature>
<feature type="transmembrane region" description="Helical" evidence="1">
    <location>
        <begin position="61"/>
        <end position="81"/>
    </location>
</feature>
<feature type="transmembrane region" description="Helical" evidence="1">
    <location>
        <begin position="137"/>
        <end position="157"/>
    </location>
</feature>
<feature type="transmembrane region" description="Helical" evidence="1">
    <location>
        <begin position="171"/>
        <end position="191"/>
    </location>
</feature>
<feature type="transmembrane region" description="Helical" evidence="1">
    <location>
        <begin position="195"/>
        <end position="215"/>
    </location>
</feature>
<feature type="transmembrane region" description="Helical" evidence="1">
    <location>
        <begin position="236"/>
        <end position="256"/>
    </location>
</feature>
<feature type="binding site" description="M2 metal binding site" evidence="1">
    <location>
        <position position="120"/>
    </location>
    <ligand>
        <name>Fe(2+)</name>
        <dbReference type="ChEBI" id="CHEBI:29033"/>
    </ligand>
</feature>
<feature type="binding site" description="M2 metal binding site" evidence="1">
    <location>
        <position position="123"/>
    </location>
    <ligand>
        <name>Fe(2+)</name>
        <dbReference type="ChEBI" id="CHEBI:29033"/>
    </ligand>
</feature>
<feature type="binding site" description="M1 metal binding site" evidence="1">
    <location>
        <position position="123"/>
    </location>
    <ligand>
        <name>Zn(2+)</name>
        <dbReference type="ChEBI" id="CHEBI:29105"/>
    </ligand>
</feature>
<feature type="binding site" description="M1 metal binding site" evidence="1">
    <location>
        <position position="148"/>
    </location>
    <ligand>
        <name>Zn(2+)</name>
        <dbReference type="ChEBI" id="CHEBI:29105"/>
    </ligand>
</feature>
<feature type="binding site" description="M2 metal binding site" evidence="1">
    <location>
        <position position="149"/>
    </location>
    <ligand>
        <name>Fe(2+)</name>
        <dbReference type="ChEBI" id="CHEBI:29033"/>
    </ligand>
</feature>
<feature type="binding site" description="M2 metal binding site" evidence="1">
    <location>
        <position position="152"/>
    </location>
    <ligand>
        <name>Fe(2+)</name>
        <dbReference type="ChEBI" id="CHEBI:29033"/>
    </ligand>
</feature>
<feature type="binding site" description="M1 metal binding site" evidence="1">
    <location>
        <position position="152"/>
    </location>
    <ligand>
        <name>Zn(2+)</name>
        <dbReference type="ChEBI" id="CHEBI:29105"/>
    </ligand>
</feature>
<feature type="binding site" description="M2 metal binding site" evidence="1">
    <location>
        <position position="181"/>
    </location>
    <ligand>
        <name>Fe(2+)</name>
        <dbReference type="ChEBI" id="CHEBI:29033"/>
    </ligand>
</feature>
<organism>
    <name type="scientific">Escherichia coli O127:H6 (strain E2348/69 / EPEC)</name>
    <dbReference type="NCBI Taxonomy" id="574521"/>
    <lineage>
        <taxon>Bacteria</taxon>
        <taxon>Pseudomonadati</taxon>
        <taxon>Pseudomonadota</taxon>
        <taxon>Gammaproteobacteria</taxon>
        <taxon>Enterobacterales</taxon>
        <taxon>Enterobacteriaceae</taxon>
        <taxon>Escherichia</taxon>
    </lineage>
</organism>
<protein>
    <recommendedName>
        <fullName evidence="1">Zinc transporter ZupT</fullName>
    </recommendedName>
</protein>
<sequence>MSVPLILTILAGAATFIGAFLGVLGQKPSNRLLAFSLGFAAGIMLLISLMEMLPAALAAEGMSPVLGYGMFIFGLLGYFGLDRMLPHAHPQDLMQKSVQPLPKSLKRTAILLTLGISLHNFPEGIATFVTASSNLELGFGIALAVALHNIPEGLAVAGPVYAATGSKRTAILWAGISGLAEILGGVLAWLILGSMISPVVMAAIMAAVAGIMVALSVDELMPLAKEIDPNNNPSYGVLCGMSVMGFSLVLLQTAGIG</sequence>
<proteinExistence type="inferred from homology"/>
<name>ZUPT_ECO27</name>
<evidence type="ECO:0000255" key="1">
    <source>
        <dbReference type="HAMAP-Rule" id="MF_00548"/>
    </source>
</evidence>
<dbReference type="EMBL" id="FM180568">
    <property type="protein sequence ID" value="CAS10886.1"/>
    <property type="molecule type" value="Genomic_DNA"/>
</dbReference>
<dbReference type="RefSeq" id="WP_001339991.1">
    <property type="nucleotide sequence ID" value="NC_011601.1"/>
</dbReference>
<dbReference type="SMR" id="B7UIV3"/>
<dbReference type="KEGG" id="ecg:E2348C_3338"/>
<dbReference type="HOGENOM" id="CLU_015114_1_3_6"/>
<dbReference type="Proteomes" id="UP000008205">
    <property type="component" value="Chromosome"/>
</dbReference>
<dbReference type="GO" id="GO:0005886">
    <property type="term" value="C:plasma membrane"/>
    <property type="evidence" value="ECO:0007669"/>
    <property type="project" value="UniProtKB-SubCell"/>
</dbReference>
<dbReference type="GO" id="GO:0046872">
    <property type="term" value="F:metal ion binding"/>
    <property type="evidence" value="ECO:0007669"/>
    <property type="project" value="UniProtKB-KW"/>
</dbReference>
<dbReference type="GO" id="GO:0005385">
    <property type="term" value="F:zinc ion transmembrane transporter activity"/>
    <property type="evidence" value="ECO:0007669"/>
    <property type="project" value="UniProtKB-UniRule"/>
</dbReference>
<dbReference type="HAMAP" id="MF_00548">
    <property type="entry name" value="ZupT"/>
    <property type="match status" value="1"/>
</dbReference>
<dbReference type="InterPro" id="IPR003689">
    <property type="entry name" value="ZIP"/>
</dbReference>
<dbReference type="InterPro" id="IPR023498">
    <property type="entry name" value="Zn_transptr_ZupT"/>
</dbReference>
<dbReference type="NCBIfam" id="NF003243">
    <property type="entry name" value="PRK04201.1"/>
    <property type="match status" value="1"/>
</dbReference>
<dbReference type="PANTHER" id="PTHR11040:SF205">
    <property type="entry name" value="ZINC TRANSPORTER ZUPT"/>
    <property type="match status" value="1"/>
</dbReference>
<dbReference type="PANTHER" id="PTHR11040">
    <property type="entry name" value="ZINC/IRON TRANSPORTER"/>
    <property type="match status" value="1"/>
</dbReference>
<dbReference type="Pfam" id="PF02535">
    <property type="entry name" value="Zip"/>
    <property type="match status" value="2"/>
</dbReference>
<accession>B7UIV3</accession>
<keyword id="KW-0997">Cell inner membrane</keyword>
<keyword id="KW-1003">Cell membrane</keyword>
<keyword id="KW-0406">Ion transport</keyword>
<keyword id="KW-0408">Iron</keyword>
<keyword id="KW-0472">Membrane</keyword>
<keyword id="KW-0479">Metal-binding</keyword>
<keyword id="KW-1185">Reference proteome</keyword>
<keyword id="KW-0812">Transmembrane</keyword>
<keyword id="KW-1133">Transmembrane helix</keyword>
<keyword id="KW-0813">Transport</keyword>
<keyword id="KW-0862">Zinc</keyword>
<keyword id="KW-0864">Zinc transport</keyword>
<reference key="1">
    <citation type="journal article" date="2009" name="J. Bacteriol.">
        <title>Complete genome sequence and comparative genome analysis of enteropathogenic Escherichia coli O127:H6 strain E2348/69.</title>
        <authorList>
            <person name="Iguchi A."/>
            <person name="Thomson N.R."/>
            <person name="Ogura Y."/>
            <person name="Saunders D."/>
            <person name="Ooka T."/>
            <person name="Henderson I.R."/>
            <person name="Harris D."/>
            <person name="Asadulghani M."/>
            <person name="Kurokawa K."/>
            <person name="Dean P."/>
            <person name="Kenny B."/>
            <person name="Quail M.A."/>
            <person name="Thurston S."/>
            <person name="Dougan G."/>
            <person name="Hayashi T."/>
            <person name="Parkhill J."/>
            <person name="Frankel G."/>
        </authorList>
    </citation>
    <scope>NUCLEOTIDE SEQUENCE [LARGE SCALE GENOMIC DNA]</scope>
    <source>
        <strain>E2348/69 / EPEC</strain>
    </source>
</reference>